<organism>
    <name type="scientific">Mycobacterium marinum (strain ATCC BAA-535 / M)</name>
    <dbReference type="NCBI Taxonomy" id="216594"/>
    <lineage>
        <taxon>Bacteria</taxon>
        <taxon>Bacillati</taxon>
        <taxon>Actinomycetota</taxon>
        <taxon>Actinomycetes</taxon>
        <taxon>Mycobacteriales</taxon>
        <taxon>Mycobacteriaceae</taxon>
        <taxon>Mycobacterium</taxon>
        <taxon>Mycobacterium ulcerans group</taxon>
    </lineage>
</organism>
<evidence type="ECO:0000255" key="1">
    <source>
        <dbReference type="HAMAP-Rule" id="MF_01326"/>
    </source>
</evidence>
<evidence type="ECO:0000305" key="2"/>
<accession>B2HCT2</accession>
<protein>
    <recommendedName>
        <fullName evidence="1">Large ribosomal subunit protein uL24</fullName>
    </recommendedName>
    <alternativeName>
        <fullName evidence="2">50S ribosomal protein L24</fullName>
    </alternativeName>
</protein>
<feature type="chain" id="PRO_1000142017" description="Large ribosomal subunit protein uL24">
    <location>
        <begin position="1"/>
        <end position="107"/>
    </location>
</feature>
<proteinExistence type="inferred from homology"/>
<comment type="function">
    <text evidence="1">One of two assembly initiator proteins, it binds directly to the 5'-end of the 23S rRNA, where it nucleates assembly of the 50S subunit.</text>
</comment>
<comment type="function">
    <text evidence="1">One of the proteins that surrounds the polypeptide exit tunnel on the outside of the subunit.</text>
</comment>
<comment type="subunit">
    <text evidence="1">Part of the 50S ribosomal subunit.</text>
</comment>
<comment type="similarity">
    <text evidence="1">Belongs to the universal ribosomal protein uL24 family.</text>
</comment>
<keyword id="KW-1185">Reference proteome</keyword>
<keyword id="KW-0687">Ribonucleoprotein</keyword>
<keyword id="KW-0689">Ribosomal protein</keyword>
<keyword id="KW-0694">RNA-binding</keyword>
<keyword id="KW-0699">rRNA-binding</keyword>
<name>RL24_MYCMM</name>
<dbReference type="EMBL" id="CP000854">
    <property type="protein sequence ID" value="ACC39504.1"/>
    <property type="molecule type" value="Genomic_DNA"/>
</dbReference>
<dbReference type="RefSeq" id="WP_011739070.1">
    <property type="nucleotide sequence ID" value="NC_010612.1"/>
</dbReference>
<dbReference type="SMR" id="B2HCT2"/>
<dbReference type="STRING" id="216594.MMAR_1046"/>
<dbReference type="GeneID" id="34341614"/>
<dbReference type="GeneID" id="93438586"/>
<dbReference type="KEGG" id="mmi:MMAR_1046"/>
<dbReference type="eggNOG" id="COG0198">
    <property type="taxonomic scope" value="Bacteria"/>
</dbReference>
<dbReference type="HOGENOM" id="CLU_093315_2_0_11"/>
<dbReference type="OrthoDB" id="9807419at2"/>
<dbReference type="Proteomes" id="UP000001190">
    <property type="component" value="Chromosome"/>
</dbReference>
<dbReference type="GO" id="GO:1990904">
    <property type="term" value="C:ribonucleoprotein complex"/>
    <property type="evidence" value="ECO:0007669"/>
    <property type="project" value="UniProtKB-KW"/>
</dbReference>
<dbReference type="GO" id="GO:0005840">
    <property type="term" value="C:ribosome"/>
    <property type="evidence" value="ECO:0007669"/>
    <property type="project" value="UniProtKB-KW"/>
</dbReference>
<dbReference type="GO" id="GO:0019843">
    <property type="term" value="F:rRNA binding"/>
    <property type="evidence" value="ECO:0007669"/>
    <property type="project" value="UniProtKB-UniRule"/>
</dbReference>
<dbReference type="GO" id="GO:0003735">
    <property type="term" value="F:structural constituent of ribosome"/>
    <property type="evidence" value="ECO:0007669"/>
    <property type="project" value="InterPro"/>
</dbReference>
<dbReference type="GO" id="GO:0006412">
    <property type="term" value="P:translation"/>
    <property type="evidence" value="ECO:0007669"/>
    <property type="project" value="UniProtKB-UniRule"/>
</dbReference>
<dbReference type="CDD" id="cd06089">
    <property type="entry name" value="KOW_RPL26"/>
    <property type="match status" value="1"/>
</dbReference>
<dbReference type="FunFam" id="2.30.30.30:FF:000004">
    <property type="entry name" value="50S ribosomal protein L24"/>
    <property type="match status" value="1"/>
</dbReference>
<dbReference type="Gene3D" id="2.30.30.30">
    <property type="match status" value="1"/>
</dbReference>
<dbReference type="HAMAP" id="MF_01326_B">
    <property type="entry name" value="Ribosomal_uL24_B"/>
    <property type="match status" value="1"/>
</dbReference>
<dbReference type="InterPro" id="IPR005824">
    <property type="entry name" value="KOW"/>
</dbReference>
<dbReference type="InterPro" id="IPR014722">
    <property type="entry name" value="Rib_uL2_dom2"/>
</dbReference>
<dbReference type="InterPro" id="IPR003256">
    <property type="entry name" value="Ribosomal_uL24"/>
</dbReference>
<dbReference type="InterPro" id="IPR005825">
    <property type="entry name" value="Ribosomal_uL24_CS"/>
</dbReference>
<dbReference type="InterPro" id="IPR041988">
    <property type="entry name" value="Ribosomal_uL24_KOW"/>
</dbReference>
<dbReference type="InterPro" id="IPR008991">
    <property type="entry name" value="Translation_prot_SH3-like_sf"/>
</dbReference>
<dbReference type="NCBIfam" id="TIGR01079">
    <property type="entry name" value="rplX_bact"/>
    <property type="match status" value="1"/>
</dbReference>
<dbReference type="PANTHER" id="PTHR12903">
    <property type="entry name" value="MITOCHONDRIAL RIBOSOMAL PROTEIN L24"/>
    <property type="match status" value="1"/>
</dbReference>
<dbReference type="Pfam" id="PF00467">
    <property type="entry name" value="KOW"/>
    <property type="match status" value="1"/>
</dbReference>
<dbReference type="Pfam" id="PF17136">
    <property type="entry name" value="ribosomal_L24"/>
    <property type="match status" value="1"/>
</dbReference>
<dbReference type="SMART" id="SM00739">
    <property type="entry name" value="KOW"/>
    <property type="match status" value="1"/>
</dbReference>
<dbReference type="SUPFAM" id="SSF50104">
    <property type="entry name" value="Translation proteins SH3-like domain"/>
    <property type="match status" value="1"/>
</dbReference>
<dbReference type="PROSITE" id="PS01108">
    <property type="entry name" value="RIBOSOMAL_L24"/>
    <property type="match status" value="1"/>
</dbReference>
<gene>
    <name evidence="1" type="primary">rplX</name>
    <name type="ordered locus">MMAR_1046</name>
</gene>
<sequence length="107" mass="11659">MKVHKGDTVLVVSGKDKGAKGKVLQAYPERNRVLVEGVNRIKKHTAISTNQRGAKSGGIVTQEAPIHVSNVMVVDSDGKPTRIGYRVDEETGKRVRISKRNGKDIQA</sequence>
<reference key="1">
    <citation type="journal article" date="2008" name="Genome Res.">
        <title>Insights from the complete genome sequence of Mycobacterium marinum on the evolution of Mycobacterium tuberculosis.</title>
        <authorList>
            <person name="Stinear T.P."/>
            <person name="Seemann T."/>
            <person name="Harrison P.F."/>
            <person name="Jenkin G.A."/>
            <person name="Davies J.K."/>
            <person name="Johnson P.D."/>
            <person name="Abdellah Z."/>
            <person name="Arrowsmith C."/>
            <person name="Chillingworth T."/>
            <person name="Churcher C."/>
            <person name="Clarke K."/>
            <person name="Cronin A."/>
            <person name="Davis P."/>
            <person name="Goodhead I."/>
            <person name="Holroyd N."/>
            <person name="Jagels K."/>
            <person name="Lord A."/>
            <person name="Moule S."/>
            <person name="Mungall K."/>
            <person name="Norbertczak H."/>
            <person name="Quail M.A."/>
            <person name="Rabbinowitsch E."/>
            <person name="Walker D."/>
            <person name="White B."/>
            <person name="Whitehead S."/>
            <person name="Small P.L."/>
            <person name="Brosch R."/>
            <person name="Ramakrishnan L."/>
            <person name="Fischbach M.A."/>
            <person name="Parkhill J."/>
            <person name="Cole S.T."/>
        </authorList>
    </citation>
    <scope>NUCLEOTIDE SEQUENCE [LARGE SCALE GENOMIC DNA]</scope>
    <source>
        <strain>ATCC BAA-535 / M</strain>
    </source>
</reference>